<accession>Q96HJ5</accession>
<accession>A8MTP8</accession>
<accession>Q8NHW2</accession>
<keyword id="KW-0025">Alternative splicing</keyword>
<keyword id="KW-0963">Cytoplasm</keyword>
<keyword id="KW-0472">Membrane</keyword>
<keyword id="KW-1267">Proteomics identification</keyword>
<keyword id="KW-0675">Receptor</keyword>
<keyword id="KW-1185">Reference proteome</keyword>
<keyword id="KW-0812">Transmembrane</keyword>
<keyword id="KW-1133">Transmembrane helix</keyword>
<sequence>MASHEVDNAELGSASAHGTPGSEAGPEELNTSVYQPIDGSPDYQKAKLQVLGAIQILNAAMILALGVFLGSLQYPYHFQKHFFFFTFYTGYPIWGAVFFCSSGTLSVVAGIKPTRTWIQNSFGMNIASATIALVGTAFLSLNIAVNIQSLRSCHSSSESPDLCNYMGSISNGMVSLLLILTLLELCVTISTIAMWCNANCCNSREEISSPPNSV</sequence>
<feature type="chain" id="PRO_0000158632" description="Membrane-spanning 4-domains subfamily A member 3">
    <location>
        <begin position="1"/>
        <end position="214"/>
    </location>
</feature>
<feature type="topological domain" description="Cytoplasmic" evidence="2">
    <location>
        <begin position="1"/>
        <end position="49"/>
    </location>
</feature>
<feature type="transmembrane region" description="Helical" evidence="2">
    <location>
        <begin position="50"/>
        <end position="70"/>
    </location>
</feature>
<feature type="topological domain" description="Extracellular" evidence="2">
    <location>
        <begin position="71"/>
        <end position="81"/>
    </location>
</feature>
<feature type="transmembrane region" description="Helical" evidence="2">
    <location>
        <begin position="82"/>
        <end position="102"/>
    </location>
</feature>
<feature type="topological domain" description="Cytoplasmic" evidence="2">
    <location>
        <begin position="103"/>
        <end position="124"/>
    </location>
</feature>
<feature type="transmembrane region" description="Helical" evidence="2">
    <location>
        <begin position="125"/>
        <end position="145"/>
    </location>
</feature>
<feature type="topological domain" description="Extracellular" evidence="2">
    <location>
        <begin position="146"/>
        <end position="175"/>
    </location>
</feature>
<feature type="transmembrane region" description="Helical" evidence="2">
    <location>
        <begin position="176"/>
        <end position="196"/>
    </location>
</feature>
<feature type="topological domain" description="Cytoplasmic" evidence="2">
    <location>
        <begin position="197"/>
        <end position="214"/>
    </location>
</feature>
<feature type="region of interest" description="Disordered" evidence="3">
    <location>
        <begin position="1"/>
        <end position="31"/>
    </location>
</feature>
<feature type="splice variant" id="VSP_045798" description="In isoform 3." evidence="6">
    <location>
        <begin position="1"/>
        <end position="123"/>
    </location>
</feature>
<feature type="splice variant" id="VSP_007109" description="In isoform 2." evidence="7">
    <location>
        <begin position="53"/>
        <end position="98"/>
    </location>
</feature>
<feature type="sequence conflict" description="In Ref. 1; AAA62319." evidence="8" ref="1">
    <original>A</original>
    <variation>T</variation>
    <location>
        <position position="24"/>
    </location>
</feature>
<feature type="sequence conflict" description="In Ref. 1; AAA62319." evidence="8" ref="1">
    <original>Q</original>
    <variation>H</variation>
    <location>
        <position position="35"/>
    </location>
</feature>
<feature type="sequence conflict" description="In Ref. 1; AAA62319." evidence="8" ref="1">
    <original>D</original>
    <variation>N</variation>
    <location>
        <position position="38"/>
    </location>
</feature>
<dbReference type="EMBL" id="L35848">
    <property type="protein sequence ID" value="AAA62319.1"/>
    <property type="molecule type" value="mRNA"/>
</dbReference>
<dbReference type="EMBL" id="AY095480">
    <property type="protein sequence ID" value="AAM23312.1"/>
    <property type="molecule type" value="mRNA"/>
</dbReference>
<dbReference type="EMBL" id="AY258289">
    <property type="protein sequence ID" value="AAP14648.1"/>
    <property type="molecule type" value="Genomic_DNA"/>
</dbReference>
<dbReference type="EMBL" id="AP000790">
    <property type="status" value="NOT_ANNOTATED_CDS"/>
    <property type="molecule type" value="Genomic_DNA"/>
</dbReference>
<dbReference type="EMBL" id="BC008487">
    <property type="protein sequence ID" value="AAH08487.1"/>
    <property type="molecule type" value="mRNA"/>
</dbReference>
<dbReference type="EMBL" id="BG494288">
    <property type="status" value="NOT_ANNOTATED_CDS"/>
    <property type="molecule type" value="mRNA"/>
</dbReference>
<dbReference type="CCDS" id="CCDS31567.1">
    <molecule id="Q96HJ5-1"/>
</dbReference>
<dbReference type="CCDS" id="CCDS31568.1">
    <molecule id="Q96HJ5-2"/>
</dbReference>
<dbReference type="CCDS" id="CCDS41651.1">
    <molecule id="Q96HJ5-3"/>
</dbReference>
<dbReference type="PIR" id="I59258">
    <property type="entry name" value="I59258"/>
</dbReference>
<dbReference type="RefSeq" id="NP_001026836.1">
    <molecule id="Q96HJ5-3"/>
    <property type="nucleotide sequence ID" value="NM_001031666.2"/>
</dbReference>
<dbReference type="RefSeq" id="NP_001026979.1">
    <molecule id="Q96HJ5-2"/>
    <property type="nucleotide sequence ID" value="NM_001031809.2"/>
</dbReference>
<dbReference type="RefSeq" id="NP_006129.4">
    <molecule id="Q96HJ5-1"/>
    <property type="nucleotide sequence ID" value="NM_006138.4"/>
</dbReference>
<dbReference type="SMR" id="Q96HJ5"/>
<dbReference type="BioGRID" id="107370">
    <property type="interactions" value="39"/>
</dbReference>
<dbReference type="FunCoup" id="Q96HJ5">
    <property type="interactions" value="56"/>
</dbReference>
<dbReference type="IntAct" id="Q96HJ5">
    <property type="interactions" value="37"/>
</dbReference>
<dbReference type="STRING" id="9606.ENSP00000278865"/>
<dbReference type="iPTMnet" id="Q96HJ5"/>
<dbReference type="PhosphoSitePlus" id="Q96HJ5"/>
<dbReference type="BioMuta" id="MS4A3"/>
<dbReference type="DMDM" id="29611825"/>
<dbReference type="MassIVE" id="Q96HJ5"/>
<dbReference type="PaxDb" id="9606-ENSP00000278865"/>
<dbReference type="PeptideAtlas" id="Q96HJ5"/>
<dbReference type="Antibodypedia" id="14413">
    <property type="antibodies" value="160 antibodies from 23 providers"/>
</dbReference>
<dbReference type="DNASU" id="932"/>
<dbReference type="Ensembl" id="ENST00000278865.8">
    <molecule id="Q96HJ5-1"/>
    <property type="protein sequence ID" value="ENSP00000278865.3"/>
    <property type="gene ID" value="ENSG00000149516.15"/>
</dbReference>
<dbReference type="Ensembl" id="ENST00000358152.6">
    <molecule id="Q96HJ5-2"/>
    <property type="protein sequence ID" value="ENSP00000350872.2"/>
    <property type="gene ID" value="ENSG00000149516.15"/>
</dbReference>
<dbReference type="Ensembl" id="ENST00000395032.6">
    <molecule id="Q96HJ5-3"/>
    <property type="protein sequence ID" value="ENSP00000378473.2"/>
    <property type="gene ID" value="ENSG00000149516.15"/>
</dbReference>
<dbReference type="Ensembl" id="ENST00000644768.2">
    <molecule id="Q96HJ5-1"/>
    <property type="protein sequence ID" value="ENSP00000495201.1"/>
    <property type="gene ID" value="ENSG00000284903.3"/>
</dbReference>
<dbReference type="Ensembl" id="ENST00000711439.1">
    <molecule id="Q96HJ5-2"/>
    <property type="protein sequence ID" value="ENSP00000518755.1"/>
    <property type="gene ID" value="ENSG00000284903.3"/>
</dbReference>
<dbReference type="Ensembl" id="ENST00000711440.1">
    <molecule id="Q96HJ5-3"/>
    <property type="protein sequence ID" value="ENSP00000518756.1"/>
    <property type="gene ID" value="ENSG00000284903.3"/>
</dbReference>
<dbReference type="GeneID" id="932"/>
<dbReference type="KEGG" id="hsa:932"/>
<dbReference type="MANE-Select" id="ENST00000278865.8">
    <property type="protein sequence ID" value="ENSP00000278865.3"/>
    <property type="RefSeq nucleotide sequence ID" value="NM_006138.5"/>
    <property type="RefSeq protein sequence ID" value="NP_006129.4"/>
</dbReference>
<dbReference type="UCSC" id="uc001nom.4">
    <molecule id="Q96HJ5-1"/>
    <property type="organism name" value="human"/>
</dbReference>
<dbReference type="AGR" id="HGNC:7317"/>
<dbReference type="CTD" id="932"/>
<dbReference type="DisGeNET" id="932"/>
<dbReference type="GeneCards" id="MS4A3"/>
<dbReference type="HGNC" id="HGNC:7317">
    <property type="gene designation" value="MS4A3"/>
</dbReference>
<dbReference type="HPA" id="ENSG00000149516">
    <property type="expression patterns" value="Tissue enriched (bone)"/>
</dbReference>
<dbReference type="MIM" id="606498">
    <property type="type" value="gene"/>
</dbReference>
<dbReference type="neXtProt" id="NX_Q96HJ5"/>
<dbReference type="OpenTargets" id="ENSG00000149516"/>
<dbReference type="PharmGKB" id="PA31112"/>
<dbReference type="VEuPathDB" id="HostDB:ENSG00000149516"/>
<dbReference type="eggNOG" id="ENOG502T41X">
    <property type="taxonomic scope" value="Eukaryota"/>
</dbReference>
<dbReference type="GeneTree" id="ENSGT00940000162383"/>
<dbReference type="HOGENOM" id="CLU_091032_6_2_1"/>
<dbReference type="InParanoid" id="Q96HJ5"/>
<dbReference type="OMA" id="TFHTGYP"/>
<dbReference type="OrthoDB" id="10071849at2759"/>
<dbReference type="PAN-GO" id="Q96HJ5">
    <property type="GO annotations" value="2 GO annotations based on evolutionary models"/>
</dbReference>
<dbReference type="PhylomeDB" id="Q96HJ5"/>
<dbReference type="TreeFam" id="TF335157"/>
<dbReference type="PathwayCommons" id="Q96HJ5"/>
<dbReference type="Reactome" id="R-HSA-6798695">
    <property type="pathway name" value="Neutrophil degranulation"/>
</dbReference>
<dbReference type="SignaLink" id="Q96HJ5"/>
<dbReference type="BioGRID-ORCS" id="932">
    <property type="hits" value="9 hits in 1153 CRISPR screens"/>
</dbReference>
<dbReference type="GeneWiki" id="MS4A3"/>
<dbReference type="GenomeRNAi" id="932"/>
<dbReference type="Pharos" id="Q96HJ5">
    <property type="development level" value="Tbio"/>
</dbReference>
<dbReference type="PRO" id="PR:Q96HJ5"/>
<dbReference type="Proteomes" id="UP000005640">
    <property type="component" value="Chromosome 11"/>
</dbReference>
<dbReference type="RNAct" id="Q96HJ5">
    <property type="molecule type" value="protein"/>
</dbReference>
<dbReference type="Bgee" id="ENSG00000149516">
    <property type="expression patterns" value="Expressed in bone marrow and 85 other cell types or tissues"/>
</dbReference>
<dbReference type="ExpressionAtlas" id="Q96HJ5">
    <property type="expression patterns" value="baseline and differential"/>
</dbReference>
<dbReference type="GO" id="GO:0048471">
    <property type="term" value="C:perinuclear region of cytoplasm"/>
    <property type="evidence" value="ECO:0007669"/>
    <property type="project" value="UniProtKB-SubCell"/>
</dbReference>
<dbReference type="GO" id="GO:0005886">
    <property type="term" value="C:plasma membrane"/>
    <property type="evidence" value="ECO:0000318"/>
    <property type="project" value="GO_Central"/>
</dbReference>
<dbReference type="GO" id="GO:0035579">
    <property type="term" value="C:specific granule membrane"/>
    <property type="evidence" value="ECO:0000304"/>
    <property type="project" value="Reactome"/>
</dbReference>
<dbReference type="InterPro" id="IPR007237">
    <property type="entry name" value="CD20-like"/>
</dbReference>
<dbReference type="InterPro" id="IPR030417">
    <property type="entry name" value="MS4A"/>
</dbReference>
<dbReference type="PANTHER" id="PTHR23320:SF74">
    <property type="entry name" value="MEMBRANE-SPANNING 4-DOMAINS SUBFAMILY A MEMBER 3"/>
    <property type="match status" value="1"/>
</dbReference>
<dbReference type="PANTHER" id="PTHR23320">
    <property type="entry name" value="MEMBRANE-SPANNING 4-DOMAINS SUBFAMILY A MS4A -RELATED"/>
    <property type="match status" value="1"/>
</dbReference>
<dbReference type="Pfam" id="PF04103">
    <property type="entry name" value="CD20"/>
    <property type="match status" value="1"/>
</dbReference>
<name>MS4A3_HUMAN</name>
<evidence type="ECO:0000250" key="1"/>
<evidence type="ECO:0000255" key="2"/>
<evidence type="ECO:0000256" key="3">
    <source>
        <dbReference type="SAM" id="MobiDB-lite"/>
    </source>
</evidence>
<evidence type="ECO:0000269" key="4">
    <source>
    </source>
</evidence>
<evidence type="ECO:0000269" key="5">
    <source>
    </source>
</evidence>
<evidence type="ECO:0000303" key="6">
    <source>
    </source>
</evidence>
<evidence type="ECO:0000303" key="7">
    <source ref="2"/>
</evidence>
<evidence type="ECO:0000305" key="8"/>
<gene>
    <name type="primary">MS4A3</name>
    <name type="synonym">CD20L</name>
    <name type="synonym">HTM4</name>
</gene>
<comment type="function">
    <text evidence="4">Hematopoietic modulator for the G1-S cell cycle transition. Modulates the level of phosphorylation of cyclin-dependent kinase 2 (CDK2) through its direct binding to cyclin-dependent kinase inhibitor 3 (CDKN3/KAP).</text>
</comment>
<comment type="subunit">
    <text evidence="4 5">Interacts with CDKN3. Interacts with CDKN3-CDK2 complexes through its binding to CDKN3; this interaction facilitates dissociation of cyclin A from CDKN3-CDK2 complexes.</text>
</comment>
<comment type="interaction">
    <interactant intactId="EBI-12806656">
        <id>Q96HJ5</id>
    </interactant>
    <interactant intactId="EBI-10827839">
        <id>Q15848</id>
        <label>ADIPOQ</label>
    </interactant>
    <organismsDiffer>false</organismsDiffer>
    <experiments>3</experiments>
</comment>
<comment type="interaction">
    <interactant intactId="EBI-12806656">
        <id>Q96HJ5</id>
    </interactant>
    <interactant intactId="EBI-3904417">
        <id>Q99437</id>
        <label>ATP6V0B</label>
    </interactant>
    <organismsDiffer>false</organismsDiffer>
    <experiments>5</experiments>
</comment>
<comment type="interaction">
    <interactant intactId="EBI-12806656">
        <id>Q96HJ5</id>
    </interactant>
    <interactant intactId="EBI-3922513">
        <id>O95393</id>
        <label>BMP10</label>
    </interactant>
    <organismsDiffer>false</organismsDiffer>
    <experiments>3</experiments>
</comment>
<comment type="interaction">
    <interactant intactId="EBI-12806656">
        <id>Q96HJ5</id>
    </interactant>
    <interactant intactId="EBI-749464">
        <id>Q12983</id>
        <label>BNIP3</label>
    </interactant>
    <organismsDiffer>false</organismsDiffer>
    <experiments>3</experiments>
</comment>
<comment type="interaction">
    <interactant intactId="EBI-12806656">
        <id>Q96HJ5</id>
    </interactant>
    <interactant intactId="EBI-12003442">
        <id>Q8WVX3-2</id>
        <label>C4orf3</label>
    </interactant>
    <organismsDiffer>false</organismsDiffer>
    <experiments>3</experiments>
</comment>
<comment type="interaction">
    <interactant intactId="EBI-12806656">
        <id>Q96HJ5</id>
    </interactant>
    <interactant intactId="EBI-9083477">
        <id>Q9P0B6</id>
        <label>CCDC167</label>
    </interactant>
    <organismsDiffer>false</organismsDiffer>
    <experiments>3</experiments>
</comment>
<comment type="interaction">
    <interactant intactId="EBI-12806656">
        <id>Q96HJ5</id>
    </interactant>
    <interactant intactId="EBI-6657396">
        <id>P19397</id>
        <label>CD53</label>
    </interactant>
    <organismsDiffer>false</organismsDiffer>
    <experiments>3</experiments>
</comment>
<comment type="interaction">
    <interactant intactId="EBI-12806656">
        <id>Q96HJ5</id>
    </interactant>
    <interactant intactId="EBI-307924">
        <id>P21854</id>
        <label>CD72</label>
    </interactant>
    <organismsDiffer>false</organismsDiffer>
    <experiments>3</experiments>
</comment>
<comment type="interaction">
    <interactant intactId="EBI-12806656">
        <id>Q96HJ5</id>
    </interactant>
    <interactant intactId="EBI-723889">
        <id>O95832</id>
        <label>CLDN1</label>
    </interactant>
    <organismsDiffer>false</organismsDiffer>
    <experiments>3</experiments>
</comment>
<comment type="interaction">
    <interactant intactId="EBI-12806656">
        <id>Q96HJ5</id>
    </interactant>
    <interactant intactId="EBI-12955011">
        <id>P56747</id>
        <label>CLDN6</label>
    </interactant>
    <organismsDiffer>false</organismsDiffer>
    <experiments>5</experiments>
</comment>
<comment type="interaction">
    <interactant intactId="EBI-12806656">
        <id>Q96HJ5</id>
    </interactant>
    <interactant intactId="EBI-1753674">
        <id>P52803</id>
        <label>EFNA5</label>
    </interactant>
    <organismsDiffer>false</organismsDiffer>
    <experiments>3</experiments>
</comment>
<comment type="interaction">
    <interactant intactId="EBI-12806656">
        <id>Q96HJ5</id>
    </interactant>
    <interactant intactId="EBI-3907816">
        <id>P54852</id>
        <label>EMP3</label>
    </interactant>
    <organismsDiffer>false</organismsDiffer>
    <experiments>3</experiments>
</comment>
<comment type="interaction">
    <interactant intactId="EBI-12806656">
        <id>Q96HJ5</id>
    </interactant>
    <interactant intactId="EBI-711490">
        <id>Q9UKR5</id>
        <label>ERG28</label>
    </interactant>
    <organismsDiffer>false</organismsDiffer>
    <experiments>3</experiments>
</comment>
<comment type="interaction">
    <interactant intactId="EBI-12806656">
        <id>Q96HJ5</id>
    </interactant>
    <interactant intactId="EBI-7932862">
        <id>Q01628</id>
        <label>IFITM3</label>
    </interactant>
    <organismsDiffer>false</organismsDiffer>
    <experiments>3</experiments>
</comment>
<comment type="interaction">
    <interactant intactId="EBI-12806656">
        <id>Q96HJ5</id>
    </interactant>
    <interactant intactId="EBI-720480">
        <id>P24593</id>
        <label>IGFBP5</label>
    </interactant>
    <organismsDiffer>false</organismsDiffer>
    <experiments>3</experiments>
</comment>
<comment type="interaction">
    <interactant intactId="EBI-12806656">
        <id>Q96HJ5</id>
    </interactant>
    <interactant intactId="EBI-12070086">
        <id>Q5J8X5</id>
        <label>MS4A13</label>
    </interactant>
    <organismsDiffer>false</organismsDiffer>
    <experiments>3</experiments>
</comment>
<comment type="interaction">
    <interactant intactId="EBI-12806656">
        <id>Q96HJ5</id>
    </interactant>
    <interactant intactId="EBI-3919611">
        <id>Q16617</id>
        <label>NKG7</label>
    </interactant>
    <organismsDiffer>false</organismsDiffer>
    <experiments>3</experiments>
</comment>
<comment type="interaction">
    <interactant intactId="EBI-12806656">
        <id>Q96HJ5</id>
    </interactant>
    <interactant intactId="EBI-12188331">
        <id>P60201-2</id>
        <label>PLP1</label>
    </interactant>
    <organismsDiffer>false</organismsDiffer>
    <experiments>3</experiments>
</comment>
<comment type="interaction">
    <interactant intactId="EBI-12806656">
        <id>Q96HJ5</id>
    </interactant>
    <interactant intactId="EBI-11721828">
        <id>Q8IY26</id>
        <label>PLPP6</label>
    </interactant>
    <organismsDiffer>false</organismsDiffer>
    <experiments>3</experiments>
</comment>
<comment type="interaction">
    <interactant intactId="EBI-12806656">
        <id>Q96HJ5</id>
    </interactant>
    <interactant intactId="EBI-8652744">
        <id>Q96IW7</id>
        <label>SEC22A</label>
    </interactant>
    <organismsDiffer>false</organismsDiffer>
    <experiments>3</experiments>
</comment>
<comment type="interaction">
    <interactant intactId="EBI-12806656">
        <id>Q96HJ5</id>
    </interactant>
    <interactant intactId="EBI-347996">
        <id>O43765</id>
        <label>SGTA</label>
    </interactant>
    <organismsDiffer>false</organismsDiffer>
    <experiments>3</experiments>
</comment>
<comment type="interaction">
    <interactant intactId="EBI-12806656">
        <id>Q96HJ5</id>
    </interactant>
    <interactant intactId="EBI-12824155">
        <id>Q9Y267</id>
        <label>SLC22A14</label>
    </interactant>
    <organismsDiffer>false</organismsDiffer>
    <experiments>4</experiments>
</comment>
<comment type="interaction">
    <interactant intactId="EBI-12806656">
        <id>Q96HJ5</id>
    </interactant>
    <interactant intactId="EBI-12409133">
        <id>Q9NY91</id>
        <label>SLC5A4</label>
    </interactant>
    <organismsDiffer>false</organismsDiffer>
    <experiments>3</experiments>
</comment>
<comment type="interaction">
    <interactant intactId="EBI-12806656">
        <id>Q96HJ5</id>
    </interactant>
    <interactant intactId="EBI-8640191">
        <id>Q9NRQ5</id>
        <label>SMCO4</label>
    </interactant>
    <organismsDiffer>false</organismsDiffer>
    <experiments>3</experiments>
</comment>
<comment type="interaction">
    <interactant intactId="EBI-12806656">
        <id>Q96HJ5</id>
    </interactant>
    <interactant intactId="EBI-741850">
        <id>Q9BZL3</id>
        <label>SMIM3</label>
    </interactant>
    <organismsDiffer>false</organismsDiffer>
    <experiments>3</experiments>
</comment>
<comment type="interaction">
    <interactant intactId="EBI-12806656">
        <id>Q96HJ5</id>
    </interactant>
    <interactant intactId="EBI-727240">
        <id>Q9UNK0</id>
        <label>STX8</label>
    </interactant>
    <organismsDiffer>false</organismsDiffer>
    <experiments>3</experiments>
</comment>
<comment type="interaction">
    <interactant intactId="EBI-12806656">
        <id>Q96HJ5</id>
    </interactant>
    <interactant intactId="EBI-10329860">
        <id>Q9Y6I9</id>
        <label>TEX264</label>
    </interactant>
    <organismsDiffer>false</organismsDiffer>
    <experiments>4</experiments>
</comment>
<comment type="interaction">
    <interactant intactId="EBI-12806656">
        <id>Q96HJ5</id>
    </interactant>
    <interactant intactId="EBI-13351685">
        <id>Q96CE8</id>
        <label>TM4SF18</label>
    </interactant>
    <organismsDiffer>false</organismsDiffer>
    <experiments>3</experiments>
</comment>
<comment type="interaction">
    <interactant intactId="EBI-12806656">
        <id>Q96HJ5</id>
    </interactant>
    <interactant intactId="EBI-1045825">
        <id>P55061</id>
        <label>TMBIM6</label>
    </interactant>
    <organismsDiffer>false</organismsDiffer>
    <experiments>3</experiments>
</comment>
<comment type="interaction">
    <interactant intactId="EBI-12806656">
        <id>Q96HJ5</id>
    </interactant>
    <interactant intactId="EBI-12845616">
        <id>Q6UX40</id>
        <label>TMEM107</label>
    </interactant>
    <organismsDiffer>false</organismsDiffer>
    <experiments>3</experiments>
</comment>
<comment type="interaction">
    <interactant intactId="EBI-12806656">
        <id>Q96HJ5</id>
    </interactant>
    <interactant intactId="EBI-2844246">
        <id>Q9NV12</id>
        <label>TMEM140</label>
    </interactant>
    <organismsDiffer>false</organismsDiffer>
    <experiments>3</experiments>
</comment>
<comment type="interaction">
    <interactant intactId="EBI-12806656">
        <id>Q96HJ5</id>
    </interactant>
    <interactant intactId="EBI-10255122">
        <id>Q6ZP80</id>
        <label>TMEM182</label>
    </interactant>
    <organismsDiffer>false</organismsDiffer>
    <experiments>5</experiments>
</comment>
<comment type="interaction">
    <interactant intactId="EBI-12806656">
        <id>Q96HJ5</id>
    </interactant>
    <interactant intactId="EBI-10173151">
        <id>A2RU14</id>
        <label>TMEM218</label>
    </interactant>
    <organismsDiffer>false</organismsDiffer>
    <experiments>5</experiments>
</comment>
<comment type="interaction">
    <interactant intactId="EBI-12806656">
        <id>Q96HJ5</id>
    </interactant>
    <interactant intactId="EBI-11528917">
        <id>Q8WW34-2</id>
        <label>TMEM239</label>
    </interactant>
    <organismsDiffer>false</organismsDiffer>
    <experiments>3</experiments>
</comment>
<comment type="interaction">
    <interactant intactId="EBI-12806656">
        <id>Q96HJ5</id>
    </interactant>
    <interactant intactId="EBI-11337915">
        <id>Q8N0U8</id>
        <label>VKORC1L1</label>
    </interactant>
    <organismsDiffer>false</organismsDiffer>
    <experiments>3</experiments>
</comment>
<comment type="interaction">
    <interactant intactId="EBI-12806656">
        <id>Q96HJ5</id>
    </interactant>
    <interactant intactId="EBI-751210">
        <id>Q96EC8</id>
        <label>YIPF6</label>
    </interactant>
    <organismsDiffer>false</organismsDiffer>
    <experiments>3</experiments>
</comment>
<comment type="interaction">
    <interactant intactId="EBI-12806656">
        <id>Q96HJ5</id>
    </interactant>
    <interactant intactId="EBI-718439">
        <id>O95159</id>
        <label>ZFPL1</label>
    </interactant>
    <organismsDiffer>false</organismsDiffer>
    <experiments>3</experiments>
</comment>
<comment type="subcellular location">
    <subcellularLocation>
        <location evidence="1">Endomembrane system</location>
        <topology evidence="1">Multi-pass membrane protein</topology>
    </subcellularLocation>
    <subcellularLocation>
        <location evidence="1">Cytoplasm</location>
        <location evidence="1">Perinuclear region</location>
    </subcellularLocation>
    <text>Located in the perinuclear area.</text>
</comment>
<comment type="alternative products">
    <event type="alternative splicing"/>
    <isoform>
        <id>Q96HJ5-1</id>
        <name>1</name>
        <sequence type="displayed"/>
    </isoform>
    <isoform>
        <id>Q96HJ5-2</id>
        <name>2</name>
        <sequence type="described" ref="VSP_007109"/>
    </isoform>
    <isoform>
        <id>Q96HJ5-3</id>
        <name>3</name>
        <sequence type="described" ref="VSP_045798"/>
    </isoform>
</comment>
<comment type="tissue specificity">
    <text>Expressed specifically in hematopoietic cells and tissues.</text>
</comment>
<comment type="domain">
    <text>The C-terminal region is required for binding to CDKN3-CDK2 complexes and the modulation of CDKN3 activity.</text>
</comment>
<comment type="similarity">
    <text evidence="8">Belongs to the MS4A family.</text>
</comment>
<reference key="1">
    <citation type="journal article" date="1994" name="Proc. Natl. Acad. Sci. U.S.A.">
        <title>Cloning of the cDNA for a hematopoietic cell-specific protein related to CD20 and the beta subunit of the high-affinity IgE receptor: evidence for a family of proteins with four membrane-spanning regions.</title>
        <authorList>
            <person name="Adra C.N."/>
            <person name="Lelias J.-M."/>
            <person name="Kobayashi H."/>
            <person name="Kaghad M."/>
            <person name="Morrison P."/>
            <person name="Rowley J.D."/>
            <person name="Lim B."/>
        </authorList>
    </citation>
    <scope>NUCLEOTIDE SEQUENCE [MRNA] (ISOFORM 1)</scope>
    <source>
        <tissue>Hematopoietic</tissue>
    </source>
</reference>
<reference key="2">
    <citation type="submission" date="2002-04" db="EMBL/GenBank/DDBJ databases">
        <title>Cloning and function analysis of the transcript variant of human hematopoietic cell-specific protein HTm4.</title>
        <authorList>
            <person name="Xie C."/>
            <person name="Yuan H.F."/>
            <person name="Xie X.Y."/>
            <person name="Li Y.H."/>
            <person name="Shi W."/>
            <person name="Wang D.M."/>
            <person name="Li H.M."/>
            <person name="Yue W."/>
            <person name="Bai C.X."/>
            <person name="Zhang R."/>
            <person name="Pei X.T."/>
        </authorList>
    </citation>
    <scope>NUCLEOTIDE SEQUENCE [MRNA] (ISOFORM 2)</scope>
    <source>
        <tissue>Bone marrow</tissue>
    </source>
</reference>
<reference key="3">
    <citation type="submission" date="2003-03" db="EMBL/GenBank/DDBJ databases">
        <authorList>
            <person name="Shirakawa T."/>
            <person name="Yang X."/>
            <person name="Lyengar A."/>
            <person name="Sayegh M."/>
            <person name="Scadden D."/>
            <person name="Adra C."/>
        </authorList>
    </citation>
    <scope>NUCLEOTIDE SEQUENCE [GENOMIC DNA]</scope>
</reference>
<reference key="4">
    <citation type="journal article" date="2006" name="Nature">
        <title>Human chromosome 11 DNA sequence and analysis including novel gene identification.</title>
        <authorList>
            <person name="Taylor T.D."/>
            <person name="Noguchi H."/>
            <person name="Totoki Y."/>
            <person name="Toyoda A."/>
            <person name="Kuroki Y."/>
            <person name="Dewar K."/>
            <person name="Lloyd C."/>
            <person name="Itoh T."/>
            <person name="Takeda T."/>
            <person name="Kim D.-W."/>
            <person name="She X."/>
            <person name="Barlow K.F."/>
            <person name="Bloom T."/>
            <person name="Bruford E."/>
            <person name="Chang J.L."/>
            <person name="Cuomo C.A."/>
            <person name="Eichler E."/>
            <person name="FitzGerald M.G."/>
            <person name="Jaffe D.B."/>
            <person name="LaButti K."/>
            <person name="Nicol R."/>
            <person name="Park H.-S."/>
            <person name="Seaman C."/>
            <person name="Sougnez C."/>
            <person name="Yang X."/>
            <person name="Zimmer A.R."/>
            <person name="Zody M.C."/>
            <person name="Birren B.W."/>
            <person name="Nusbaum C."/>
            <person name="Fujiyama A."/>
            <person name="Hattori M."/>
            <person name="Rogers J."/>
            <person name="Lander E.S."/>
            <person name="Sakaki Y."/>
        </authorList>
    </citation>
    <scope>NUCLEOTIDE SEQUENCE [LARGE SCALE GENOMIC DNA]</scope>
</reference>
<reference key="5">
    <citation type="journal article" date="2004" name="Genome Res.">
        <title>The status, quality, and expansion of the NIH full-length cDNA project: the Mammalian Gene Collection (MGC).</title>
        <authorList>
            <consortium name="The MGC Project Team"/>
        </authorList>
    </citation>
    <scope>NUCLEOTIDE SEQUENCE [LARGE SCALE MRNA] (ISOFORMS 1 AND 3)</scope>
    <source>
        <tissue>Epidermal carcinoma</tissue>
        <tissue>Lung</tissue>
    </source>
</reference>
<reference key="6">
    <citation type="journal article" date="2002" name="J. Clin. Invest.">
        <title>Human HTm4 is a hematopoietic cell cycle regulator.</title>
        <authorList>
            <person name="Donato J.-L."/>
            <person name="Ko J."/>
            <person name="Kutok J.L."/>
            <person name="Cheng T."/>
            <person name="Shirakawa T."/>
            <person name="Mao X.-Q."/>
            <person name="Beach D."/>
            <person name="Scadden D.T."/>
            <person name="Sayegh M.H."/>
            <person name="Adra C.N."/>
        </authorList>
    </citation>
    <scope>FUNCTION</scope>
    <scope>INTERACTION WITH CDKN3</scope>
</reference>
<reference key="7">
    <citation type="journal article" date="2005" name="J. Biol. Chem.">
        <title>Binding of HTm4 to cyclin-dependent kinase (Cdk)-associated phosphatase (KAP).Cdk2.cyclin A complex enhances the phosphatase activity of KAP, dissociates cyclin A, and facilitates KAP dephosphorylation of Cdk2.</title>
        <authorList>
            <person name="Chinami M."/>
            <person name="Yano Y."/>
            <person name="Yang X."/>
            <person name="Salahuddin S."/>
            <person name="Moriyama K."/>
            <person name="Shiroishi M."/>
            <person name="Turner H."/>
            <person name="Shirakawa T."/>
            <person name="Adra C.N."/>
        </authorList>
    </citation>
    <scope>INTERACTION WITH CDKN3</scope>
</reference>
<proteinExistence type="evidence at protein level"/>
<protein>
    <recommendedName>
        <fullName>Membrane-spanning 4-domains subfamily A member 3</fullName>
    </recommendedName>
    <alternativeName>
        <fullName>CD20 antigen-like protein</fullName>
    </alternativeName>
    <alternativeName>
        <fullName>Hematopoietic-specific transmembrane protein 4</fullName>
        <shortName>HTm4</shortName>
    </alternativeName>
</protein>
<organism>
    <name type="scientific">Homo sapiens</name>
    <name type="common">Human</name>
    <dbReference type="NCBI Taxonomy" id="9606"/>
    <lineage>
        <taxon>Eukaryota</taxon>
        <taxon>Metazoa</taxon>
        <taxon>Chordata</taxon>
        <taxon>Craniata</taxon>
        <taxon>Vertebrata</taxon>
        <taxon>Euteleostomi</taxon>
        <taxon>Mammalia</taxon>
        <taxon>Eutheria</taxon>
        <taxon>Euarchontoglires</taxon>
        <taxon>Primates</taxon>
        <taxon>Haplorrhini</taxon>
        <taxon>Catarrhini</taxon>
        <taxon>Hominidae</taxon>
        <taxon>Homo</taxon>
    </lineage>
</organism>